<dbReference type="EC" id="2.1.3.2" evidence="1"/>
<dbReference type="EMBL" id="CP000240">
    <property type="protein sequence ID" value="ABD02872.1"/>
    <property type="molecule type" value="Genomic_DNA"/>
</dbReference>
<dbReference type="RefSeq" id="WP_011433512.1">
    <property type="nucleotide sequence ID" value="NC_007776.1"/>
</dbReference>
<dbReference type="SMR" id="Q2JKC1"/>
<dbReference type="STRING" id="321332.CYB_1917"/>
<dbReference type="KEGG" id="cyb:CYB_1917"/>
<dbReference type="eggNOG" id="COG0540">
    <property type="taxonomic scope" value="Bacteria"/>
</dbReference>
<dbReference type="HOGENOM" id="CLU_043846_2_0_3"/>
<dbReference type="OrthoDB" id="9774690at2"/>
<dbReference type="UniPathway" id="UPA00070">
    <property type="reaction ID" value="UER00116"/>
</dbReference>
<dbReference type="Proteomes" id="UP000001938">
    <property type="component" value="Chromosome"/>
</dbReference>
<dbReference type="GO" id="GO:0005829">
    <property type="term" value="C:cytosol"/>
    <property type="evidence" value="ECO:0007669"/>
    <property type="project" value="TreeGrafter"/>
</dbReference>
<dbReference type="GO" id="GO:0016597">
    <property type="term" value="F:amino acid binding"/>
    <property type="evidence" value="ECO:0007669"/>
    <property type="project" value="InterPro"/>
</dbReference>
<dbReference type="GO" id="GO:0004070">
    <property type="term" value="F:aspartate carbamoyltransferase activity"/>
    <property type="evidence" value="ECO:0007669"/>
    <property type="project" value="UniProtKB-UniRule"/>
</dbReference>
<dbReference type="GO" id="GO:0006207">
    <property type="term" value="P:'de novo' pyrimidine nucleobase biosynthetic process"/>
    <property type="evidence" value="ECO:0007669"/>
    <property type="project" value="InterPro"/>
</dbReference>
<dbReference type="GO" id="GO:0044205">
    <property type="term" value="P:'de novo' UMP biosynthetic process"/>
    <property type="evidence" value="ECO:0007669"/>
    <property type="project" value="UniProtKB-UniRule"/>
</dbReference>
<dbReference type="GO" id="GO:0006520">
    <property type="term" value="P:amino acid metabolic process"/>
    <property type="evidence" value="ECO:0007669"/>
    <property type="project" value="InterPro"/>
</dbReference>
<dbReference type="Gene3D" id="3.40.50.1370">
    <property type="entry name" value="Aspartate/ornithine carbamoyltransferase"/>
    <property type="match status" value="2"/>
</dbReference>
<dbReference type="HAMAP" id="MF_00001">
    <property type="entry name" value="Asp_carb_tr"/>
    <property type="match status" value="1"/>
</dbReference>
<dbReference type="InterPro" id="IPR006132">
    <property type="entry name" value="Asp/Orn_carbamoyltranf_P-bd"/>
</dbReference>
<dbReference type="InterPro" id="IPR006130">
    <property type="entry name" value="Asp/Orn_carbamoylTrfase"/>
</dbReference>
<dbReference type="InterPro" id="IPR036901">
    <property type="entry name" value="Asp/Orn_carbamoylTrfase_sf"/>
</dbReference>
<dbReference type="InterPro" id="IPR002082">
    <property type="entry name" value="Asp_carbamoyltransf"/>
</dbReference>
<dbReference type="InterPro" id="IPR006131">
    <property type="entry name" value="Asp_carbamoyltransf_Asp/Orn-bd"/>
</dbReference>
<dbReference type="NCBIfam" id="TIGR00670">
    <property type="entry name" value="asp_carb_tr"/>
    <property type="match status" value="1"/>
</dbReference>
<dbReference type="NCBIfam" id="NF002032">
    <property type="entry name" value="PRK00856.1"/>
    <property type="match status" value="1"/>
</dbReference>
<dbReference type="PANTHER" id="PTHR45753:SF6">
    <property type="entry name" value="ASPARTATE CARBAMOYLTRANSFERASE"/>
    <property type="match status" value="1"/>
</dbReference>
<dbReference type="PANTHER" id="PTHR45753">
    <property type="entry name" value="ORNITHINE CARBAMOYLTRANSFERASE, MITOCHONDRIAL"/>
    <property type="match status" value="1"/>
</dbReference>
<dbReference type="Pfam" id="PF00185">
    <property type="entry name" value="OTCace"/>
    <property type="match status" value="1"/>
</dbReference>
<dbReference type="Pfam" id="PF02729">
    <property type="entry name" value="OTCace_N"/>
    <property type="match status" value="1"/>
</dbReference>
<dbReference type="PRINTS" id="PR00100">
    <property type="entry name" value="AOTCASE"/>
</dbReference>
<dbReference type="PRINTS" id="PR00101">
    <property type="entry name" value="ATCASE"/>
</dbReference>
<dbReference type="SUPFAM" id="SSF53671">
    <property type="entry name" value="Aspartate/ornithine carbamoyltransferase"/>
    <property type="match status" value="1"/>
</dbReference>
<dbReference type="PROSITE" id="PS00097">
    <property type="entry name" value="CARBAMOYLTRANSFERASE"/>
    <property type="match status" value="1"/>
</dbReference>
<reference key="1">
    <citation type="journal article" date="2007" name="ISME J.">
        <title>Population level functional diversity in a microbial community revealed by comparative genomic and metagenomic analyses.</title>
        <authorList>
            <person name="Bhaya D."/>
            <person name="Grossman A.R."/>
            <person name="Steunou A.-S."/>
            <person name="Khuri N."/>
            <person name="Cohan F.M."/>
            <person name="Hamamura N."/>
            <person name="Melendrez M.C."/>
            <person name="Bateson M.M."/>
            <person name="Ward D.M."/>
            <person name="Heidelberg J.F."/>
        </authorList>
    </citation>
    <scope>NUCLEOTIDE SEQUENCE [LARGE SCALE GENOMIC DNA]</scope>
    <source>
        <strain>JA-2-3B'a(2-13)</strain>
    </source>
</reference>
<comment type="function">
    <text evidence="1">Catalyzes the condensation of carbamoyl phosphate and aspartate to form carbamoyl aspartate and inorganic phosphate, the committed step in the de novo pyrimidine nucleotide biosynthesis pathway.</text>
</comment>
<comment type="catalytic activity">
    <reaction evidence="1">
        <text>carbamoyl phosphate + L-aspartate = N-carbamoyl-L-aspartate + phosphate + H(+)</text>
        <dbReference type="Rhea" id="RHEA:20013"/>
        <dbReference type="ChEBI" id="CHEBI:15378"/>
        <dbReference type="ChEBI" id="CHEBI:29991"/>
        <dbReference type="ChEBI" id="CHEBI:32814"/>
        <dbReference type="ChEBI" id="CHEBI:43474"/>
        <dbReference type="ChEBI" id="CHEBI:58228"/>
        <dbReference type="EC" id="2.1.3.2"/>
    </reaction>
</comment>
<comment type="pathway">
    <text evidence="1">Pyrimidine metabolism; UMP biosynthesis via de novo pathway; (S)-dihydroorotate from bicarbonate: step 2/3.</text>
</comment>
<comment type="subunit">
    <text evidence="1">Heterododecamer (2C3:3R2) of six catalytic PyrB chains organized as two trimers (C3), and six regulatory PyrI chains organized as three dimers (R2).</text>
</comment>
<comment type="similarity">
    <text evidence="1">Belongs to the aspartate/ornithine carbamoyltransferase superfamily. ATCase family.</text>
</comment>
<accession>Q2JKC1</accession>
<feature type="chain" id="PRO_0000321171" description="Aspartate carbamoyltransferase catalytic subunit">
    <location>
        <begin position="1"/>
        <end position="326"/>
    </location>
</feature>
<feature type="binding site" evidence="1">
    <location>
        <position position="58"/>
    </location>
    <ligand>
        <name>carbamoyl phosphate</name>
        <dbReference type="ChEBI" id="CHEBI:58228"/>
    </ligand>
</feature>
<feature type="binding site" evidence="1">
    <location>
        <position position="59"/>
    </location>
    <ligand>
        <name>carbamoyl phosphate</name>
        <dbReference type="ChEBI" id="CHEBI:58228"/>
    </ligand>
</feature>
<feature type="binding site" evidence="1">
    <location>
        <position position="86"/>
    </location>
    <ligand>
        <name>L-aspartate</name>
        <dbReference type="ChEBI" id="CHEBI:29991"/>
    </ligand>
</feature>
<feature type="binding site" evidence="1">
    <location>
        <position position="108"/>
    </location>
    <ligand>
        <name>carbamoyl phosphate</name>
        <dbReference type="ChEBI" id="CHEBI:58228"/>
    </ligand>
</feature>
<feature type="binding site" evidence="1">
    <location>
        <position position="141"/>
    </location>
    <ligand>
        <name>carbamoyl phosphate</name>
        <dbReference type="ChEBI" id="CHEBI:58228"/>
    </ligand>
</feature>
<feature type="binding site" evidence="1">
    <location>
        <position position="144"/>
    </location>
    <ligand>
        <name>carbamoyl phosphate</name>
        <dbReference type="ChEBI" id="CHEBI:58228"/>
    </ligand>
</feature>
<feature type="binding site" evidence="1">
    <location>
        <position position="181"/>
    </location>
    <ligand>
        <name>L-aspartate</name>
        <dbReference type="ChEBI" id="CHEBI:29991"/>
    </ligand>
</feature>
<feature type="binding site" evidence="1">
    <location>
        <position position="239"/>
    </location>
    <ligand>
        <name>L-aspartate</name>
        <dbReference type="ChEBI" id="CHEBI:29991"/>
    </ligand>
</feature>
<feature type="binding site" evidence="1">
    <location>
        <position position="280"/>
    </location>
    <ligand>
        <name>carbamoyl phosphate</name>
        <dbReference type="ChEBI" id="CHEBI:58228"/>
    </ligand>
</feature>
<feature type="binding site" evidence="1">
    <location>
        <position position="281"/>
    </location>
    <ligand>
        <name>carbamoyl phosphate</name>
        <dbReference type="ChEBI" id="CHEBI:58228"/>
    </ligand>
</feature>
<sequence>MVWQRQHVLGLADFTPEEYQMVLQTSASFQEVLTRRLPKVPTLQGKVVVTLFFEPSTRTRTSFELAAKRLSADVLNFSPGTSSLSKGETLLDTARTFLAMGSDLLIVRHAQAGVPQQLAAEIDRRGSPVGVLNAGDGLHEHPTQGLLDLFTLCSHLDPRRPRLELLQGIKIAIVGDILHSRVARSDIYALVAAGAEVHLAGPPTLLPKDFAQFVPGHTLPIHWQLEPALEGARFVITLRLQQERMGEFLLPSLQEYHHFFGLTRQRLRLCHPEVRVLHPGPVNRGVELSSEVMEDPGLNLIEQQVTHGVAVRMALLYLMGGGRIPA</sequence>
<evidence type="ECO:0000255" key="1">
    <source>
        <dbReference type="HAMAP-Rule" id="MF_00001"/>
    </source>
</evidence>
<proteinExistence type="inferred from homology"/>
<organism>
    <name type="scientific">Synechococcus sp. (strain JA-2-3B'a(2-13))</name>
    <name type="common">Cyanobacteria bacterium Yellowstone B-Prime</name>
    <dbReference type="NCBI Taxonomy" id="321332"/>
    <lineage>
        <taxon>Bacteria</taxon>
        <taxon>Bacillati</taxon>
        <taxon>Cyanobacteriota</taxon>
        <taxon>Cyanophyceae</taxon>
        <taxon>Synechococcales</taxon>
        <taxon>Synechococcaceae</taxon>
        <taxon>Synechococcus</taxon>
    </lineage>
</organism>
<name>PYRB_SYNJB</name>
<gene>
    <name evidence="1" type="primary">pyrB</name>
    <name type="ordered locus">CYB_1917</name>
</gene>
<keyword id="KW-0665">Pyrimidine biosynthesis</keyword>
<keyword id="KW-1185">Reference proteome</keyword>
<keyword id="KW-0808">Transferase</keyword>
<protein>
    <recommendedName>
        <fullName evidence="1">Aspartate carbamoyltransferase catalytic subunit</fullName>
        <ecNumber evidence="1">2.1.3.2</ecNumber>
    </recommendedName>
    <alternativeName>
        <fullName evidence="1">Aspartate transcarbamylase</fullName>
        <shortName evidence="1">ATCase</shortName>
    </alternativeName>
</protein>